<dbReference type="EC" id="3.6.1.1" evidence="2"/>
<dbReference type="EMBL" id="AF085600">
    <property type="protein sequence ID" value="AAC97111.1"/>
    <property type="status" value="ALT_INIT"/>
    <property type="molecule type" value="Genomic_DNA"/>
</dbReference>
<dbReference type="EMBL" id="AF085601">
    <property type="protein sequence ID" value="AAC97112.1"/>
    <property type="molecule type" value="mRNA"/>
</dbReference>
<dbReference type="EMBL" id="AE013599">
    <property type="protein sequence ID" value="AAF47227.2"/>
    <property type="molecule type" value="Genomic_DNA"/>
</dbReference>
<dbReference type="EMBL" id="AY075479">
    <property type="protein sequence ID" value="AAL68291.1"/>
    <property type="status" value="ALT_FRAME"/>
    <property type="molecule type" value="mRNA"/>
</dbReference>
<dbReference type="RefSeq" id="NP_001137758.1">
    <property type="nucleotide sequence ID" value="NM_001144286.3"/>
</dbReference>
<dbReference type="RefSeq" id="NP_523849.3">
    <property type="nucleotide sequence ID" value="NM_079125.3"/>
</dbReference>
<dbReference type="SMR" id="O77460"/>
<dbReference type="BioGRID" id="63494">
    <property type="interactions" value="28"/>
</dbReference>
<dbReference type="ComplexPortal" id="CPX-2362">
    <property type="entry name" value="NuRF nucleosome remodelling factor"/>
</dbReference>
<dbReference type="FunCoup" id="O77460">
    <property type="interactions" value="1972"/>
</dbReference>
<dbReference type="IntAct" id="O77460">
    <property type="interactions" value="88"/>
</dbReference>
<dbReference type="MINT" id="O77460"/>
<dbReference type="STRING" id="7227.FBpp0072250"/>
<dbReference type="PaxDb" id="7227-FBpp0072250"/>
<dbReference type="DNASU" id="37922"/>
<dbReference type="EnsemblMetazoa" id="FBtr0072343">
    <property type="protein sequence ID" value="FBpp0072250"/>
    <property type="gene ID" value="FBgn0016687"/>
</dbReference>
<dbReference type="GeneID" id="37922"/>
<dbReference type="KEGG" id="dme:Dmel_CG4634"/>
<dbReference type="AGR" id="FB:FBgn0016687"/>
<dbReference type="CTD" id="37922"/>
<dbReference type="FlyBase" id="FBgn0016687">
    <property type="gene designation" value="Nurf-38"/>
</dbReference>
<dbReference type="VEuPathDB" id="VectorBase:FBgn0016687"/>
<dbReference type="eggNOG" id="KOG1626">
    <property type="taxonomic scope" value="Eukaryota"/>
</dbReference>
<dbReference type="GeneTree" id="ENSGT00390000017004"/>
<dbReference type="InParanoid" id="O77460"/>
<dbReference type="OMA" id="CASQYNA"/>
<dbReference type="OrthoDB" id="1608002at2759"/>
<dbReference type="PhylomeDB" id="O77460"/>
<dbReference type="Reactome" id="R-DME-379716">
    <property type="pathway name" value="Cytosolic tRNA aminoacylation"/>
</dbReference>
<dbReference type="Reactome" id="R-DME-379726">
    <property type="pathway name" value="Mitochondrial tRNA aminoacylation"/>
</dbReference>
<dbReference type="Reactome" id="R-DME-71737">
    <property type="pathway name" value="Pyrophosphate hydrolysis"/>
</dbReference>
<dbReference type="BioGRID-ORCS" id="37922">
    <property type="hits" value="2 hits in 3 CRISPR screens"/>
</dbReference>
<dbReference type="GenomeRNAi" id="37922"/>
<dbReference type="PRO" id="PR:O77460"/>
<dbReference type="Proteomes" id="UP000000803">
    <property type="component" value="Chromosome 2R"/>
</dbReference>
<dbReference type="Bgee" id="FBgn0016687">
    <property type="expression patterns" value="Expressed in secondary oocyte and 225 other cell types or tissues"/>
</dbReference>
<dbReference type="ExpressionAtlas" id="O77460">
    <property type="expression patterns" value="baseline and differential"/>
</dbReference>
<dbReference type="GO" id="GO:0005737">
    <property type="term" value="C:cytoplasm"/>
    <property type="evidence" value="ECO:0000314"/>
    <property type="project" value="FlyBase"/>
</dbReference>
<dbReference type="GO" id="GO:0005739">
    <property type="term" value="C:mitochondrion"/>
    <property type="evidence" value="ECO:0000250"/>
    <property type="project" value="FlyBase"/>
</dbReference>
<dbReference type="GO" id="GO:0005634">
    <property type="term" value="C:nucleus"/>
    <property type="evidence" value="ECO:0000314"/>
    <property type="project" value="FlyBase"/>
</dbReference>
<dbReference type="GO" id="GO:0016589">
    <property type="term" value="C:NURF complex"/>
    <property type="evidence" value="ECO:0000314"/>
    <property type="project" value="FlyBase"/>
</dbReference>
<dbReference type="GO" id="GO:0004427">
    <property type="term" value="F:inorganic diphosphate phosphatase activity"/>
    <property type="evidence" value="ECO:0000314"/>
    <property type="project" value="FlyBase"/>
</dbReference>
<dbReference type="GO" id="GO:0000287">
    <property type="term" value="F:magnesium ion binding"/>
    <property type="evidence" value="ECO:0007669"/>
    <property type="project" value="InterPro"/>
</dbReference>
<dbReference type="GO" id="GO:0006338">
    <property type="term" value="P:chromatin remodeling"/>
    <property type="evidence" value="ECO:0000314"/>
    <property type="project" value="FlyBase"/>
</dbReference>
<dbReference type="GO" id="GO:0034728">
    <property type="term" value="P:nucleosome organization"/>
    <property type="evidence" value="ECO:0000314"/>
    <property type="project" value="FlyBase"/>
</dbReference>
<dbReference type="GO" id="GO:0006796">
    <property type="term" value="P:phosphate-containing compound metabolic process"/>
    <property type="evidence" value="ECO:0000318"/>
    <property type="project" value="GO_Central"/>
</dbReference>
<dbReference type="GO" id="GO:0045893">
    <property type="term" value="P:positive regulation of DNA-templated transcription"/>
    <property type="evidence" value="ECO:0000314"/>
    <property type="project" value="FlyBase"/>
</dbReference>
<dbReference type="GO" id="GO:0045944">
    <property type="term" value="P:positive regulation of transcription by RNA polymerase II"/>
    <property type="evidence" value="ECO:0000316"/>
    <property type="project" value="FlyBase"/>
</dbReference>
<dbReference type="GO" id="GO:0035206">
    <property type="term" value="P:regulation of hemocyte proliferation"/>
    <property type="evidence" value="ECO:0000315"/>
    <property type="project" value="FlyBase"/>
</dbReference>
<dbReference type="CDD" id="cd00412">
    <property type="entry name" value="pyrophosphatase"/>
    <property type="match status" value="1"/>
</dbReference>
<dbReference type="FunFam" id="3.90.80.10:FF:000004">
    <property type="entry name" value="Inorganic pyrophosphatase"/>
    <property type="match status" value="1"/>
</dbReference>
<dbReference type="Gene3D" id="3.90.80.10">
    <property type="entry name" value="Inorganic pyrophosphatase"/>
    <property type="match status" value="1"/>
</dbReference>
<dbReference type="InterPro" id="IPR008162">
    <property type="entry name" value="Pyrophosphatase"/>
</dbReference>
<dbReference type="InterPro" id="IPR036649">
    <property type="entry name" value="Pyrophosphatase_sf"/>
</dbReference>
<dbReference type="PANTHER" id="PTHR10286">
    <property type="entry name" value="INORGANIC PYROPHOSPHATASE"/>
    <property type="match status" value="1"/>
</dbReference>
<dbReference type="Pfam" id="PF00719">
    <property type="entry name" value="Pyrophosphatase"/>
    <property type="match status" value="1"/>
</dbReference>
<dbReference type="SUPFAM" id="SSF50324">
    <property type="entry name" value="Inorganic pyrophosphatase"/>
    <property type="match status" value="1"/>
</dbReference>
<dbReference type="PROSITE" id="PS00387">
    <property type="entry name" value="PPASE"/>
    <property type="match status" value="1"/>
</dbReference>
<accession>O77460</accession>
<accession>Q9W150</accession>
<keyword id="KW-0156">Chromatin regulator</keyword>
<keyword id="KW-0963">Cytoplasm</keyword>
<keyword id="KW-0903">Direct protein sequencing</keyword>
<keyword id="KW-0378">Hydrolase</keyword>
<keyword id="KW-0460">Magnesium</keyword>
<keyword id="KW-0479">Metal-binding</keyword>
<keyword id="KW-0539">Nucleus</keyword>
<keyword id="KW-1185">Reference proteome</keyword>
<keyword id="KW-0804">Transcription</keyword>
<keyword id="KW-0805">Transcription regulation</keyword>
<organism>
    <name type="scientific">Drosophila melanogaster</name>
    <name type="common">Fruit fly</name>
    <dbReference type="NCBI Taxonomy" id="7227"/>
    <lineage>
        <taxon>Eukaryota</taxon>
        <taxon>Metazoa</taxon>
        <taxon>Ecdysozoa</taxon>
        <taxon>Arthropoda</taxon>
        <taxon>Hexapoda</taxon>
        <taxon>Insecta</taxon>
        <taxon>Pterygota</taxon>
        <taxon>Neoptera</taxon>
        <taxon>Endopterygota</taxon>
        <taxon>Diptera</taxon>
        <taxon>Brachycera</taxon>
        <taxon>Muscomorpha</taxon>
        <taxon>Ephydroidea</taxon>
        <taxon>Drosophilidae</taxon>
        <taxon>Drosophila</taxon>
        <taxon>Sophophora</taxon>
    </lineage>
</organism>
<name>IPYR_DROME</name>
<gene>
    <name type="primary">Nurf-38</name>
    <name type="ORF">CG4634</name>
</gene>
<comment type="function">
    <text evidence="2 3 4">Component of NURF (nucleosome remodeling factor), a complex which catalyzes ATP-dependent nucleosome sliding and facilitates transcription of chromatin (PubMed:9784495). NURF is required for homeotic gene expression, proper larval blood cell development, normal male X chromosome morphology, ecdysteroid signaling and metamorphosis (PubMed:8521501, PubMed:9784495). Inorganic pyrophosphatase (PPase), hydrolyzes inorganic pyrophosphate to inorganic phosphate, essential for driving critical biosynthetic reactions including transcription, replication, and DNA repair (PubMed:9784495).</text>
</comment>
<comment type="catalytic activity">
    <reaction evidence="2">
        <text>diphosphate + H2O = 2 phosphate + H(+)</text>
        <dbReference type="Rhea" id="RHEA:24576"/>
        <dbReference type="ChEBI" id="CHEBI:15377"/>
        <dbReference type="ChEBI" id="CHEBI:15378"/>
        <dbReference type="ChEBI" id="CHEBI:33019"/>
        <dbReference type="ChEBI" id="CHEBI:43474"/>
        <dbReference type="EC" id="3.6.1.1"/>
    </reaction>
    <physiologicalReaction direction="left-to-right" evidence="2">
        <dbReference type="Rhea" id="RHEA:24577"/>
    </physiologicalReaction>
</comment>
<comment type="cofactor">
    <cofactor evidence="1">
        <name>Mg(2+)</name>
        <dbReference type="ChEBI" id="CHEBI:18420"/>
    </cofactor>
</comment>
<comment type="subunit">
    <text evidence="2">Component of the NURF complex composed of Caf1-55, E(bx), Nurf-38 and Iswi.</text>
</comment>
<comment type="subcellular location">
    <subcellularLocation>
        <location>Cytoplasm</location>
    </subcellularLocation>
    <subcellularLocation>
        <location evidence="2">Nucleus</location>
    </subcellularLocation>
</comment>
<comment type="miscellaneous">
    <text>The ATPase activity of NURF is stimulated by the presence of nucleosomes rather than by free DNA.</text>
</comment>
<comment type="similarity">
    <text evidence="5">Belongs to the PPase family.</text>
</comment>
<comment type="sequence caution" evidence="5">
    <conflict type="erroneous initiation">
        <sequence resource="EMBL-CDS" id="AAC97111"/>
    </conflict>
</comment>
<comment type="sequence caution" evidence="5">
    <conflict type="frameshift">
        <sequence resource="EMBL-CDS" id="AAL68291"/>
    </conflict>
</comment>
<proteinExistence type="evidence at protein level"/>
<feature type="chain" id="PRO_0000137572" description="Inorganic pyrophosphatase">
    <location>
        <begin position="1"/>
        <end position="338"/>
    </location>
</feature>
<feature type="binding site" evidence="1">
    <location>
        <position position="129"/>
    </location>
    <ligand>
        <name>diphosphate</name>
        <dbReference type="ChEBI" id="CHEBI:33019"/>
    </ligand>
</feature>
<feature type="binding site" evidence="1">
    <location>
        <position position="166"/>
    </location>
    <ligand>
        <name>Mg(2+)</name>
        <dbReference type="ChEBI" id="CHEBI:18420"/>
        <label>1</label>
    </ligand>
</feature>
<feature type="binding site" evidence="1">
    <location>
        <position position="171"/>
    </location>
    <ligand>
        <name>Mg(2+)</name>
        <dbReference type="ChEBI" id="CHEBI:18420"/>
        <label>1</label>
    </ligand>
</feature>
<feature type="binding site" evidence="1">
    <location>
        <position position="171"/>
    </location>
    <ligand>
        <name>Mg(2+)</name>
        <dbReference type="ChEBI" id="CHEBI:18420"/>
        <label>2</label>
    </ligand>
</feature>
<feature type="binding site" evidence="1">
    <location>
        <position position="203"/>
    </location>
    <ligand>
        <name>Mg(2+)</name>
        <dbReference type="ChEBI" id="CHEBI:18420"/>
        <label>1</label>
    </ligand>
</feature>
<feature type="mutagenesis site" description="Drastic reduction of activity." evidence="2">
    <original>R</original>
    <variation>A</variation>
    <location>
        <position position="129"/>
    </location>
</feature>
<feature type="sequence conflict" description="In Ref. 1; AAC97111/AAC97112." evidence="5" ref="1">
    <original>TI</original>
    <variation>QF</variation>
    <location>
        <begin position="193"/>
        <end position="194"/>
    </location>
</feature>
<reference key="1">
    <citation type="journal article" date="1998" name="Genes Dev.">
        <title>Inorganic pyrophosphatase is a component of the Drosophila nucleosome remodeling factor complex.</title>
        <authorList>
            <person name="Gdula D.A."/>
            <person name="Sandaltzopoulos R."/>
            <person name="Tsukiyama T."/>
            <person name="Ossipow V."/>
            <person name="Wu C."/>
        </authorList>
    </citation>
    <scope>NUCLEOTIDE SEQUENCE [GENOMIC DNA / MRNA]</scope>
    <scope>PARTIAL PROTEIN SEQUENCE</scope>
    <scope>FUNCTION</scope>
    <scope>CATALYTIC ACTIVITY</scope>
    <scope>SUBUNIT</scope>
    <scope>SUBCELLULAR LOCATION</scope>
    <scope>MUTAGENESIS OF ARG-129</scope>
</reference>
<reference key="2">
    <citation type="journal article" date="2000" name="Science">
        <title>The genome sequence of Drosophila melanogaster.</title>
        <authorList>
            <person name="Adams M.D."/>
            <person name="Celniker S.E."/>
            <person name="Holt R.A."/>
            <person name="Evans C.A."/>
            <person name="Gocayne J.D."/>
            <person name="Amanatides P.G."/>
            <person name="Scherer S.E."/>
            <person name="Li P.W."/>
            <person name="Hoskins R.A."/>
            <person name="Galle R.F."/>
            <person name="George R.A."/>
            <person name="Lewis S.E."/>
            <person name="Richards S."/>
            <person name="Ashburner M."/>
            <person name="Henderson S.N."/>
            <person name="Sutton G.G."/>
            <person name="Wortman J.R."/>
            <person name="Yandell M.D."/>
            <person name="Zhang Q."/>
            <person name="Chen L.X."/>
            <person name="Brandon R.C."/>
            <person name="Rogers Y.-H.C."/>
            <person name="Blazej R.G."/>
            <person name="Champe M."/>
            <person name="Pfeiffer B.D."/>
            <person name="Wan K.H."/>
            <person name="Doyle C."/>
            <person name="Baxter E.G."/>
            <person name="Helt G."/>
            <person name="Nelson C.R."/>
            <person name="Miklos G.L.G."/>
            <person name="Abril J.F."/>
            <person name="Agbayani A."/>
            <person name="An H.-J."/>
            <person name="Andrews-Pfannkoch C."/>
            <person name="Baldwin D."/>
            <person name="Ballew R.M."/>
            <person name="Basu A."/>
            <person name="Baxendale J."/>
            <person name="Bayraktaroglu L."/>
            <person name="Beasley E.M."/>
            <person name="Beeson K.Y."/>
            <person name="Benos P.V."/>
            <person name="Berman B.P."/>
            <person name="Bhandari D."/>
            <person name="Bolshakov S."/>
            <person name="Borkova D."/>
            <person name="Botchan M.R."/>
            <person name="Bouck J."/>
            <person name="Brokstein P."/>
            <person name="Brottier P."/>
            <person name="Burtis K.C."/>
            <person name="Busam D.A."/>
            <person name="Butler H."/>
            <person name="Cadieu E."/>
            <person name="Center A."/>
            <person name="Chandra I."/>
            <person name="Cherry J.M."/>
            <person name="Cawley S."/>
            <person name="Dahlke C."/>
            <person name="Davenport L.B."/>
            <person name="Davies P."/>
            <person name="de Pablos B."/>
            <person name="Delcher A."/>
            <person name="Deng Z."/>
            <person name="Mays A.D."/>
            <person name="Dew I."/>
            <person name="Dietz S.M."/>
            <person name="Dodson K."/>
            <person name="Doup L.E."/>
            <person name="Downes M."/>
            <person name="Dugan-Rocha S."/>
            <person name="Dunkov B.C."/>
            <person name="Dunn P."/>
            <person name="Durbin K.J."/>
            <person name="Evangelista C.C."/>
            <person name="Ferraz C."/>
            <person name="Ferriera S."/>
            <person name="Fleischmann W."/>
            <person name="Fosler C."/>
            <person name="Gabrielian A.E."/>
            <person name="Garg N.S."/>
            <person name="Gelbart W.M."/>
            <person name="Glasser K."/>
            <person name="Glodek A."/>
            <person name="Gong F."/>
            <person name="Gorrell J.H."/>
            <person name="Gu Z."/>
            <person name="Guan P."/>
            <person name="Harris M."/>
            <person name="Harris N.L."/>
            <person name="Harvey D.A."/>
            <person name="Heiman T.J."/>
            <person name="Hernandez J.R."/>
            <person name="Houck J."/>
            <person name="Hostin D."/>
            <person name="Houston K.A."/>
            <person name="Howland T.J."/>
            <person name="Wei M.-H."/>
            <person name="Ibegwam C."/>
            <person name="Jalali M."/>
            <person name="Kalush F."/>
            <person name="Karpen G.H."/>
            <person name="Ke Z."/>
            <person name="Kennison J.A."/>
            <person name="Ketchum K.A."/>
            <person name="Kimmel B.E."/>
            <person name="Kodira C.D."/>
            <person name="Kraft C.L."/>
            <person name="Kravitz S."/>
            <person name="Kulp D."/>
            <person name="Lai Z."/>
            <person name="Lasko P."/>
            <person name="Lei Y."/>
            <person name="Levitsky A.A."/>
            <person name="Li J.H."/>
            <person name="Li Z."/>
            <person name="Liang Y."/>
            <person name="Lin X."/>
            <person name="Liu X."/>
            <person name="Mattei B."/>
            <person name="McIntosh T.C."/>
            <person name="McLeod M.P."/>
            <person name="McPherson D."/>
            <person name="Merkulov G."/>
            <person name="Milshina N.V."/>
            <person name="Mobarry C."/>
            <person name="Morris J."/>
            <person name="Moshrefi A."/>
            <person name="Mount S.M."/>
            <person name="Moy M."/>
            <person name="Murphy B."/>
            <person name="Murphy L."/>
            <person name="Muzny D.M."/>
            <person name="Nelson D.L."/>
            <person name="Nelson D.R."/>
            <person name="Nelson K.A."/>
            <person name="Nixon K."/>
            <person name="Nusskern D.R."/>
            <person name="Pacleb J.M."/>
            <person name="Palazzolo M."/>
            <person name="Pittman G.S."/>
            <person name="Pan S."/>
            <person name="Pollard J."/>
            <person name="Puri V."/>
            <person name="Reese M.G."/>
            <person name="Reinert K."/>
            <person name="Remington K."/>
            <person name="Saunders R.D.C."/>
            <person name="Scheeler F."/>
            <person name="Shen H."/>
            <person name="Shue B.C."/>
            <person name="Siden-Kiamos I."/>
            <person name="Simpson M."/>
            <person name="Skupski M.P."/>
            <person name="Smith T.J."/>
            <person name="Spier E."/>
            <person name="Spradling A.C."/>
            <person name="Stapleton M."/>
            <person name="Strong R."/>
            <person name="Sun E."/>
            <person name="Svirskas R."/>
            <person name="Tector C."/>
            <person name="Turner R."/>
            <person name="Venter E."/>
            <person name="Wang A.H."/>
            <person name="Wang X."/>
            <person name="Wang Z.-Y."/>
            <person name="Wassarman D.A."/>
            <person name="Weinstock G.M."/>
            <person name="Weissenbach J."/>
            <person name="Williams S.M."/>
            <person name="Woodage T."/>
            <person name="Worley K.C."/>
            <person name="Wu D."/>
            <person name="Yang S."/>
            <person name="Yao Q.A."/>
            <person name="Ye J."/>
            <person name="Yeh R.-F."/>
            <person name="Zaveri J.S."/>
            <person name="Zhan M."/>
            <person name="Zhang G."/>
            <person name="Zhao Q."/>
            <person name="Zheng L."/>
            <person name="Zheng X.H."/>
            <person name="Zhong F.N."/>
            <person name="Zhong W."/>
            <person name="Zhou X."/>
            <person name="Zhu S.C."/>
            <person name="Zhu X."/>
            <person name="Smith H.O."/>
            <person name="Gibbs R.A."/>
            <person name="Myers E.W."/>
            <person name="Rubin G.M."/>
            <person name="Venter J.C."/>
        </authorList>
    </citation>
    <scope>NUCLEOTIDE SEQUENCE [LARGE SCALE GENOMIC DNA]</scope>
    <source>
        <strain>Berkeley</strain>
    </source>
</reference>
<reference key="3">
    <citation type="journal article" date="2002" name="Genome Biol.">
        <title>Annotation of the Drosophila melanogaster euchromatic genome: a systematic review.</title>
        <authorList>
            <person name="Misra S."/>
            <person name="Crosby M.A."/>
            <person name="Mungall C.J."/>
            <person name="Matthews B.B."/>
            <person name="Campbell K.S."/>
            <person name="Hradecky P."/>
            <person name="Huang Y."/>
            <person name="Kaminker J.S."/>
            <person name="Millburn G.H."/>
            <person name="Prochnik S.E."/>
            <person name="Smith C.D."/>
            <person name="Tupy J.L."/>
            <person name="Whitfield E.J."/>
            <person name="Bayraktaroglu L."/>
            <person name="Berman B.P."/>
            <person name="Bettencourt B.R."/>
            <person name="Celniker S.E."/>
            <person name="de Grey A.D.N.J."/>
            <person name="Drysdale R.A."/>
            <person name="Harris N.L."/>
            <person name="Richter J."/>
            <person name="Russo S."/>
            <person name="Schroeder A.J."/>
            <person name="Shu S.Q."/>
            <person name="Stapleton M."/>
            <person name="Yamada C."/>
            <person name="Ashburner M."/>
            <person name="Gelbart W.M."/>
            <person name="Rubin G.M."/>
            <person name="Lewis S.E."/>
        </authorList>
    </citation>
    <scope>GENOME REANNOTATION</scope>
    <source>
        <strain>Berkeley</strain>
    </source>
</reference>
<reference key="4">
    <citation type="journal article" date="2002" name="Genome Biol.">
        <title>A Drosophila full-length cDNA resource.</title>
        <authorList>
            <person name="Stapleton M."/>
            <person name="Carlson J.W."/>
            <person name="Brokstein P."/>
            <person name="Yu C."/>
            <person name="Champe M."/>
            <person name="George R.A."/>
            <person name="Guarin H."/>
            <person name="Kronmiller B."/>
            <person name="Pacleb J.M."/>
            <person name="Park S."/>
            <person name="Wan K.H."/>
            <person name="Rubin G.M."/>
            <person name="Celniker S.E."/>
        </authorList>
    </citation>
    <scope>NUCLEOTIDE SEQUENCE [LARGE SCALE MRNA]</scope>
    <source>
        <strain>Berkeley</strain>
        <tissue>Embryo</tissue>
    </source>
</reference>
<reference key="5">
    <citation type="journal article" date="1995" name="Cell">
        <title>Purification and properties of an ATP-dependent nucleosome remodeling factor.</title>
        <authorList>
            <person name="Tsukiyama T."/>
            <person name="Wu C."/>
        </authorList>
    </citation>
    <scope>FUNCTION</scope>
</reference>
<protein>
    <recommendedName>
        <fullName>Inorganic pyrophosphatase</fullName>
        <ecNumber evidence="2">3.6.1.1</ecNumber>
    </recommendedName>
    <alternativeName>
        <fullName>Nucleosome-remodeling factor 38 kDa subunit</fullName>
    </alternativeName>
    <alternativeName>
        <fullName>Pyrophosphate phospho-hydrolase</fullName>
        <shortName>PPase</shortName>
    </alternativeName>
</protein>
<evidence type="ECO:0000250" key="1"/>
<evidence type="ECO:0000269" key="2">
    <source>
    </source>
</evidence>
<evidence type="ECO:0000303" key="3">
    <source>
    </source>
</evidence>
<evidence type="ECO:0000303" key="4">
    <source>
    </source>
</evidence>
<evidence type="ECO:0000305" key="5"/>
<sequence>MLAKITRSSFYASRAVGRLSGSIPTSPAALASNCRYIQIERKRTKSHEMALYETVEKGAKNSPSYSLYFKNKCGNVISPMHDIPLYANEEKTIYNMVVEVPRWTNAKMEISLKTPMNPIKQDIKKGKLRFVANCFPHKGYIWNYGALPQTWENPDHIEPSTGCKGDNDPIDVIEIGYRVAKRGDVLKVKVLGTIALIDEGETDWKIIAIDVNDPLASKVNDIADVDQYFPGLLRATVEWFKIYKIPDGKPENQFAFNGDAKNADFANTIIAETHKFWQNLVHQSPASGSISTTNITNRNSEHVIPKEEAEKILAEAPDGGQVEEVSDTVDTWHFIHLK</sequence>